<feature type="chain" id="PRO_0000369854" description="Non-structural protein 1, peptide 1">
    <location>
        <begin position="1"/>
        <end position="107"/>
    </location>
</feature>
<feature type="transmembrane region" description="Helical" evidence="1">
    <location>
        <begin position="39"/>
        <end position="59"/>
    </location>
</feature>
<sequence length="107" mass="11726">MGNRQSSAQLNSHLTHINSQNSNLFISDSKTAVFHTQHILLAAGVGIIATLLVLLLCSCVLNCYLCRRLKRTNGVSSLLERNLRQNGSSAKIYVKPVMQSSTIIEEA</sequence>
<organismHost>
    <name type="scientific">Homo sapiens</name>
    <name type="common">Human</name>
    <dbReference type="NCBI Taxonomy" id="9606"/>
</organismHost>
<protein>
    <recommendedName>
        <fullName>Non-structural protein 1, peptide 1</fullName>
        <shortName>NSP1 peptide 1</shortName>
    </recommendedName>
    <alternativeName>
        <fullName>NSP1-1</fullName>
    </alternativeName>
</protein>
<evidence type="ECO:0000255" key="1"/>
<evidence type="ECO:0000305" key="2"/>
<name>NSP1A_ROTGA</name>
<accession>Q86198</accession>
<organism>
    <name type="scientific">Rotavirus B (isolate RVB/Human/China/ADRV/1982)</name>
    <name type="common">RV-B</name>
    <name type="synonym">Rotavirus B (isolate adult diarrhea rotavirus)</name>
    <dbReference type="NCBI Taxonomy" id="10942"/>
    <lineage>
        <taxon>Viruses</taxon>
        <taxon>Riboviria</taxon>
        <taxon>Orthornavirae</taxon>
        <taxon>Duplornaviricota</taxon>
        <taxon>Resentoviricetes</taxon>
        <taxon>Reovirales</taxon>
        <taxon>Sedoreoviridae</taxon>
        <taxon>Rotavirus</taxon>
        <taxon>Rotavirus B</taxon>
    </lineage>
</organism>
<dbReference type="EMBL" id="M91435">
    <property type="protein sequence ID" value="AAA47330.1"/>
    <property type="molecule type" value="Genomic_RNA"/>
</dbReference>
<dbReference type="SMR" id="Q86198"/>
<dbReference type="GO" id="GO:0033644">
    <property type="term" value="C:host cell membrane"/>
    <property type="evidence" value="ECO:0007669"/>
    <property type="project" value="UniProtKB-SubCell"/>
</dbReference>
<dbReference type="GO" id="GO:0016020">
    <property type="term" value="C:membrane"/>
    <property type="evidence" value="ECO:0007669"/>
    <property type="project" value="UniProtKB-KW"/>
</dbReference>
<comment type="subcellular location">
    <subcellularLocation>
        <location evidence="2">Host membrane</location>
        <topology evidence="2">Single-pass membrane protein</topology>
    </subcellularLocation>
</comment>
<comment type="similarity">
    <text evidence="2">Belongs to the rotavirus B NSP1-1 family.</text>
</comment>
<keyword id="KW-1043">Host membrane</keyword>
<keyword id="KW-0472">Membrane</keyword>
<keyword id="KW-0812">Transmembrane</keyword>
<keyword id="KW-1133">Transmembrane helix</keyword>
<reference key="1">
    <citation type="submission" date="1992-09" db="EMBL/GenBank/DDBJ databases">
        <title>Primary Identification of the sitth RNA segment of the group B rotavirus ADRV.</title>
        <authorList>
            <person name="Mackow E.R."/>
            <person name="Chen G."/>
            <person name="Werner R."/>
            <person name="Fay M.E."/>
            <person name="Tao H."/>
        </authorList>
    </citation>
    <scope>NUCLEOTIDE SEQUENCE [GENOMIC RNA]</scope>
</reference>
<proteinExistence type="inferred from homology"/>